<sequence>MEGGPAVCCQDPRAELVERVAAIDVTHLEEADGGPEPTRNGVDPPPRARAASVIPGSTSRLLPARPSLSARKLSLQERPAGSYLEAQAGPYATGPASHISPRAWRRPTIESHHVAISDAEDCVQLNQYKLQSEIGKGAYGVVRLAYNESEDRHYAMKVLSKKKLLKQYGFPRRPPPRGSQAAQGGPAKQLLPLERVYQEIAILKKLDHVNVVKLIEVLDDPAEDNLYLVFDLLRKGPVMEVPCDKPFSEEQARLYLRDVILGLEYLHCQKIVHRDIKPSNLLLGDDGHVKIADFGVSNQFEGNDAQLSSTAGTPAFMAPEAISDSGQSFSGKALDVWATGVTLYCFVYGKCPFIDDFILALHRKIKNEPVVFPEEPEISEELKDLILKMLDKNPETRIGVPDIKLHPWVTKNGEEPLPSEEEHCSVVEVTEEEVKNSVRLIPSWTTVILVKSMLRKRSFGNPFEPQARREERSMSAPGNLLVKEGFGEGGKSPELPGVQEDEAAS</sequence>
<protein>
    <recommendedName>
        <fullName>Calcium/calmodulin-dependent protein kinase kinase 1</fullName>
        <shortName>CaM-KK 1</shortName>
        <shortName>CaM-kinase kinase 1</shortName>
        <shortName>CaMKK 1</shortName>
        <ecNumber>2.7.11.17</ecNumber>
    </recommendedName>
    <alternativeName>
        <fullName>CaM-kinase IV kinase</fullName>
    </alternativeName>
    <alternativeName>
        <fullName>Calcium/calmodulin-dependent protein kinase kinase alpha</fullName>
        <shortName>CaM-KK alpha</shortName>
        <shortName>CaM-kinase kinase alpha</shortName>
        <shortName>CaMKK alpha</shortName>
    </alternativeName>
</protein>
<evidence type="ECO:0000250" key="1"/>
<evidence type="ECO:0000250" key="2">
    <source>
        <dbReference type="UniProtKB" id="P97756"/>
    </source>
</evidence>
<evidence type="ECO:0000250" key="3">
    <source>
        <dbReference type="UniProtKB" id="Q8VBY2"/>
    </source>
</evidence>
<evidence type="ECO:0000255" key="4">
    <source>
        <dbReference type="PROSITE-ProRule" id="PRU00159"/>
    </source>
</evidence>
<evidence type="ECO:0000255" key="5">
    <source>
        <dbReference type="PROSITE-ProRule" id="PRU10027"/>
    </source>
</evidence>
<evidence type="ECO:0000256" key="6">
    <source>
        <dbReference type="SAM" id="MobiDB-lite"/>
    </source>
</evidence>
<evidence type="ECO:0000269" key="7">
    <source>
    </source>
</evidence>
<evidence type="ECO:0000269" key="8">
    <source>
    </source>
</evidence>
<evidence type="ECO:0000269" key="9">
    <source>
    </source>
</evidence>
<evidence type="ECO:0000303" key="10">
    <source>
    </source>
</evidence>
<evidence type="ECO:0000303" key="11">
    <source>
    </source>
</evidence>
<evidence type="ECO:0000303" key="12">
    <source ref="1"/>
</evidence>
<evidence type="ECO:0007744" key="13">
    <source>
    </source>
</evidence>
<evidence type="ECO:0007744" key="14">
    <source>
    </source>
</evidence>
<evidence type="ECO:0007744" key="15">
    <source>
    </source>
</evidence>
<evidence type="ECO:0007744" key="16">
    <source>
    </source>
</evidence>
<evidence type="ECO:0007829" key="17">
    <source>
        <dbReference type="PDB" id="6CCF"/>
    </source>
</evidence>
<reference key="1">
    <citation type="submission" date="2001-09" db="EMBL/GenBank/DDBJ databases">
        <title>Characterization of human CaMKK alpha gene structure.</title>
        <authorList>
            <person name="Harvey M."/>
            <person name="Carra S."/>
            <person name="Tascedda F."/>
            <person name="Barden N."/>
        </authorList>
    </citation>
    <scope>NUCLEOTIDE SEQUENCE [MRNA] (ISOFORM 2)</scope>
    <source>
        <tissue>Brain</tissue>
    </source>
</reference>
<reference key="2">
    <citation type="journal article" date="2001" name="Genome Res.">
        <title>Towards a catalog of human genes and proteins: sequencing and analysis of 500 novel complete protein coding human cDNAs.</title>
        <authorList>
            <person name="Wiemann S."/>
            <person name="Weil B."/>
            <person name="Wellenreuther R."/>
            <person name="Gassenhuber J."/>
            <person name="Glassl S."/>
            <person name="Ansorge W."/>
            <person name="Boecher M."/>
            <person name="Bloecker H."/>
            <person name="Bauersachs S."/>
            <person name="Blum H."/>
            <person name="Lauber J."/>
            <person name="Duesterhoeft A."/>
            <person name="Beyer A."/>
            <person name="Koehrer K."/>
            <person name="Strack N."/>
            <person name="Mewes H.-W."/>
            <person name="Ottenwaelder B."/>
            <person name="Obermaier B."/>
            <person name="Tampe J."/>
            <person name="Heubner D."/>
            <person name="Wambutt R."/>
            <person name="Korn B."/>
            <person name="Klein M."/>
            <person name="Poustka A."/>
        </authorList>
    </citation>
    <scope>NUCLEOTIDE SEQUENCE [LARGE SCALE MRNA] (ISOFORM 2)</scope>
    <source>
        <tissue>Amygdala</tissue>
    </source>
</reference>
<reference key="3">
    <citation type="journal article" date="2004" name="Genome Res.">
        <title>The status, quality, and expansion of the NIH full-length cDNA project: the Mammalian Gene Collection (MGC).</title>
        <authorList>
            <consortium name="The MGC Project Team"/>
        </authorList>
    </citation>
    <scope>NUCLEOTIDE SEQUENCE [LARGE SCALE MRNA] (ISOFORMS 1 AND 2)</scope>
    <scope>VARIANT GLY-375</scope>
    <source>
        <tissue>Brain</tissue>
    </source>
</reference>
<reference key="4">
    <citation type="journal article" date="2003" name="FEBS Lett.">
        <title>Identification and characterization of novel components of a Ca2+/calmodulin-dependent protein kinase cascade in HeLa cells.</title>
        <authorList>
            <person name="Ishikawa Y."/>
            <person name="Tokumitsu H."/>
            <person name="Inuzuka H."/>
            <person name="Murata-Hori M."/>
            <person name="Hosoya H."/>
            <person name="Kobayashi R."/>
        </authorList>
    </citation>
    <scope>FUNCTION IN PHOSPHORYLATION OF CAMK1D</scope>
</reference>
<reference key="5">
    <citation type="journal article" date="2008" name="Mol. Cell">
        <title>Kinase-selective enrichment enables quantitative phosphoproteomics of the kinome across the cell cycle.</title>
        <authorList>
            <person name="Daub H."/>
            <person name="Olsen J.V."/>
            <person name="Bairlein M."/>
            <person name="Gnad F."/>
            <person name="Oppermann F.S."/>
            <person name="Korner R."/>
            <person name="Greff Z."/>
            <person name="Keri G."/>
            <person name="Stemmann O."/>
            <person name="Mann M."/>
        </authorList>
    </citation>
    <scope>PHOSPHORYLATION [LARGE SCALE ANALYSIS] AT SER-458</scope>
    <scope>IDENTIFICATION BY MASS SPECTROMETRY [LARGE SCALE ANALYSIS]</scope>
    <source>
        <tissue>Cervix carcinoma</tissue>
    </source>
</reference>
<reference key="6">
    <citation type="journal article" date="2008" name="Proc. Natl. Acad. Sci. U.S.A.">
        <title>A quantitative atlas of mitotic phosphorylation.</title>
        <authorList>
            <person name="Dephoure N."/>
            <person name="Zhou C."/>
            <person name="Villen J."/>
            <person name="Beausoleil S.A."/>
            <person name="Bakalarski C.E."/>
            <person name="Elledge S.J."/>
            <person name="Gygi S.P."/>
        </authorList>
    </citation>
    <scope>PHOSPHORYLATION [LARGE SCALE ANALYSIS] AT SER-492</scope>
    <scope>IDENTIFICATION BY MASS SPECTROMETRY [LARGE SCALE ANALYSIS]</scope>
    <source>
        <tissue>Cervix carcinoma</tissue>
    </source>
</reference>
<reference key="7">
    <citation type="journal article" date="2010" name="Sci. Signal.">
        <title>Quantitative phosphoproteomics reveals widespread full phosphorylation site occupancy during mitosis.</title>
        <authorList>
            <person name="Olsen J.V."/>
            <person name="Vermeulen M."/>
            <person name="Santamaria A."/>
            <person name="Kumar C."/>
            <person name="Miller M.L."/>
            <person name="Jensen L.J."/>
            <person name="Gnad F."/>
            <person name="Cox J."/>
            <person name="Jensen T.S."/>
            <person name="Nigg E.A."/>
            <person name="Brunak S."/>
            <person name="Mann M."/>
        </authorList>
    </citation>
    <scope>IDENTIFICATION BY MASS SPECTROMETRY [LARGE SCALE ANALYSIS]</scope>
    <source>
        <tissue>Cervix carcinoma</tissue>
    </source>
</reference>
<reference key="8">
    <citation type="journal article" date="2012" name="Proc. Natl. Acad. Sci. U.S.A.">
        <title>N-terminal acetylome analyses and functional insights of the N-terminal acetyltransferase NatB.</title>
        <authorList>
            <person name="Van Damme P."/>
            <person name="Lasa M."/>
            <person name="Polevoda B."/>
            <person name="Gazquez C."/>
            <person name="Elosegui-Artola A."/>
            <person name="Kim D.S."/>
            <person name="De Juan-Pardo E."/>
            <person name="Demeyer K."/>
            <person name="Hole K."/>
            <person name="Larrea E."/>
            <person name="Timmerman E."/>
            <person name="Prieto J."/>
            <person name="Arnesen T."/>
            <person name="Sherman F."/>
            <person name="Gevaert K."/>
            <person name="Aldabe R."/>
        </authorList>
    </citation>
    <scope>IDENTIFICATION BY MASS SPECTROMETRY [LARGE SCALE ANALYSIS]</scope>
</reference>
<reference key="9">
    <citation type="journal article" date="2013" name="J. Proteome Res.">
        <title>Toward a comprehensive characterization of a human cancer cell phosphoproteome.</title>
        <authorList>
            <person name="Zhou H."/>
            <person name="Di Palma S."/>
            <person name="Preisinger C."/>
            <person name="Peng M."/>
            <person name="Polat A.N."/>
            <person name="Heck A.J."/>
            <person name="Mohammed S."/>
        </authorList>
    </citation>
    <scope>PHOSPHORYLATION [LARGE SCALE ANALYSIS] AT SER-67 AND SER-458</scope>
    <scope>IDENTIFICATION BY MASS SPECTROMETRY [LARGE SCALE ANALYSIS]</scope>
    <source>
        <tissue>Cervix carcinoma</tissue>
        <tissue>Erythroleukemia</tissue>
    </source>
</reference>
<reference key="10">
    <citation type="journal article" date="2014" name="J. Proteomics">
        <title>An enzyme assisted RP-RPLC approach for in-depth analysis of human liver phosphoproteome.</title>
        <authorList>
            <person name="Bian Y."/>
            <person name="Song C."/>
            <person name="Cheng K."/>
            <person name="Dong M."/>
            <person name="Wang F."/>
            <person name="Huang J."/>
            <person name="Sun D."/>
            <person name="Wang L."/>
            <person name="Ye M."/>
            <person name="Zou H."/>
        </authorList>
    </citation>
    <scope>PHOSPHORYLATION [LARGE SCALE ANALYSIS] AT SER-458</scope>
    <scope>IDENTIFICATION BY MASS SPECTROMETRY [LARGE SCALE ANALYSIS]</scope>
    <source>
        <tissue>Liver</tissue>
    </source>
</reference>
<reference key="11">
    <citation type="journal article" date="2007" name="Nature">
        <title>Patterns of somatic mutation in human cancer genomes.</title>
        <authorList>
            <person name="Greenman C."/>
            <person name="Stephens P."/>
            <person name="Smith R."/>
            <person name="Dalgliesh G.L."/>
            <person name="Hunter C."/>
            <person name="Bignell G."/>
            <person name="Davies H."/>
            <person name="Teague J."/>
            <person name="Butler A."/>
            <person name="Stevens C."/>
            <person name="Edkins S."/>
            <person name="O'Meara S."/>
            <person name="Vastrik I."/>
            <person name="Schmidt E.E."/>
            <person name="Avis T."/>
            <person name="Barthorpe S."/>
            <person name="Bhamra G."/>
            <person name="Buck G."/>
            <person name="Choudhury B."/>
            <person name="Clements J."/>
            <person name="Cole J."/>
            <person name="Dicks E."/>
            <person name="Forbes S."/>
            <person name="Gray K."/>
            <person name="Halliday K."/>
            <person name="Harrison R."/>
            <person name="Hills K."/>
            <person name="Hinton J."/>
            <person name="Jenkinson A."/>
            <person name="Jones D."/>
            <person name="Menzies A."/>
            <person name="Mironenko T."/>
            <person name="Perry J."/>
            <person name="Raine K."/>
            <person name="Richardson D."/>
            <person name="Shepherd R."/>
            <person name="Small A."/>
            <person name="Tofts C."/>
            <person name="Varian J."/>
            <person name="Webb T."/>
            <person name="West S."/>
            <person name="Widaa S."/>
            <person name="Yates A."/>
            <person name="Cahill D.P."/>
            <person name="Louis D.N."/>
            <person name="Goldstraw P."/>
            <person name="Nicholson A.G."/>
            <person name="Brasseur F."/>
            <person name="Looijenga L."/>
            <person name="Weber B.L."/>
            <person name="Chiew Y.-E."/>
            <person name="DeFazio A."/>
            <person name="Greaves M.F."/>
            <person name="Green A.R."/>
            <person name="Campbell P."/>
            <person name="Birney E."/>
            <person name="Easton D.F."/>
            <person name="Chenevix-Trench G."/>
            <person name="Tan M.-H."/>
            <person name="Khoo S.K."/>
            <person name="Teh B.T."/>
            <person name="Yuen S.T."/>
            <person name="Leung S.Y."/>
            <person name="Wooster R."/>
            <person name="Futreal P.A."/>
            <person name="Stratton M.R."/>
        </authorList>
    </citation>
    <scope>VARIANT [LARGE SCALE ANALYSIS] GLY-375</scope>
</reference>
<proteinExistence type="evidence at protein level"/>
<name>KKCC1_HUMAN</name>
<organism>
    <name type="scientific">Homo sapiens</name>
    <name type="common">Human</name>
    <dbReference type="NCBI Taxonomy" id="9606"/>
    <lineage>
        <taxon>Eukaryota</taxon>
        <taxon>Metazoa</taxon>
        <taxon>Chordata</taxon>
        <taxon>Craniata</taxon>
        <taxon>Vertebrata</taxon>
        <taxon>Euteleostomi</taxon>
        <taxon>Mammalia</taxon>
        <taxon>Eutheria</taxon>
        <taxon>Euarchontoglires</taxon>
        <taxon>Primates</taxon>
        <taxon>Haplorrhini</taxon>
        <taxon>Catarrhini</taxon>
        <taxon>Hominidae</taxon>
        <taxon>Homo</taxon>
    </lineage>
</organism>
<comment type="function">
    <text evidence="7">Calcium/calmodulin-dependent protein kinase that belongs to a proposed calcium-triggered signaling cascade involved in a number of cellular processes. Phosphorylates CAMK1, CAMK1D, CAMK1G and CAMK4. Involved in regulating cell apoptosis. Promotes cell survival by phosphorylating AKT1/PKB that inhibits pro-apoptotic BAD/Bcl2-antagonist of cell death.</text>
</comment>
<comment type="catalytic activity">
    <reaction>
        <text>L-seryl-[protein] + ATP = O-phospho-L-seryl-[protein] + ADP + H(+)</text>
        <dbReference type="Rhea" id="RHEA:17989"/>
        <dbReference type="Rhea" id="RHEA-COMP:9863"/>
        <dbReference type="Rhea" id="RHEA-COMP:11604"/>
        <dbReference type="ChEBI" id="CHEBI:15378"/>
        <dbReference type="ChEBI" id="CHEBI:29999"/>
        <dbReference type="ChEBI" id="CHEBI:30616"/>
        <dbReference type="ChEBI" id="CHEBI:83421"/>
        <dbReference type="ChEBI" id="CHEBI:456216"/>
        <dbReference type="EC" id="2.7.11.17"/>
    </reaction>
</comment>
<comment type="catalytic activity">
    <reaction>
        <text>L-threonyl-[protein] + ATP = O-phospho-L-threonyl-[protein] + ADP + H(+)</text>
        <dbReference type="Rhea" id="RHEA:46608"/>
        <dbReference type="Rhea" id="RHEA-COMP:11060"/>
        <dbReference type="Rhea" id="RHEA-COMP:11605"/>
        <dbReference type="ChEBI" id="CHEBI:15378"/>
        <dbReference type="ChEBI" id="CHEBI:30013"/>
        <dbReference type="ChEBI" id="CHEBI:30616"/>
        <dbReference type="ChEBI" id="CHEBI:61977"/>
        <dbReference type="ChEBI" id="CHEBI:456216"/>
        <dbReference type="EC" id="2.7.11.17"/>
    </reaction>
</comment>
<comment type="activity regulation">
    <text evidence="1">Activated by Ca(2+)/calmodulin. Binding of calmodulin may relieve intrasteric autoinhibition. Partially inhibited upon phosphorylation by PRCAKA/PKA (By similarity). May be regulated through phosphorylation by CAMK1 and CAMK4.</text>
</comment>
<comment type="subunit">
    <text evidence="1">Interacts with CAMK4 and calmodulin.</text>
</comment>
<comment type="interaction">
    <interactant intactId="EBI-6424030">
        <id>Q8N5S9</id>
    </interactant>
    <interactant intactId="EBI-8796785">
        <id>O15063</id>
        <label>GARRE1</label>
    </interactant>
    <organismsDiffer>false</organismsDiffer>
    <experiments>4</experiments>
</comment>
<comment type="interaction">
    <interactant intactId="EBI-6424030">
        <id>Q8N5S9</id>
    </interactant>
    <interactant intactId="EBI-356498">
        <id>P62258</id>
        <label>YWHAE</label>
    </interactant>
    <organismsDiffer>false</organismsDiffer>
    <experiments>3</experiments>
</comment>
<comment type="interaction">
    <interactant intactId="EBI-6424030">
        <id>Q8N5S9</id>
    </interactant>
    <interactant intactId="EBI-306940">
        <id>Q04917</id>
        <label>YWHAH</label>
    </interactant>
    <organismsDiffer>false</organismsDiffer>
    <experiments>7</experiments>
</comment>
<comment type="interaction">
    <interactant intactId="EBI-25850646">
        <id>Q8N5S9-2</id>
    </interactant>
    <interactant intactId="EBI-9641086">
        <id>P21333-2</id>
        <label>FLNA</label>
    </interactant>
    <organismsDiffer>false</organismsDiffer>
    <experiments>3</experiments>
</comment>
<comment type="interaction">
    <interactant intactId="EBI-25850646">
        <id>Q8N5S9-2</id>
    </interactant>
    <interactant intactId="EBI-352682">
        <id>P04792</id>
        <label>HSPB1</label>
    </interactant>
    <organismsDiffer>false</organismsDiffer>
    <experiments>3</experiments>
</comment>
<comment type="interaction">
    <interactant intactId="EBI-25850646">
        <id>Q8N5S9-2</id>
    </interactant>
    <interactant intactId="EBI-466029">
        <id>P42858</id>
        <label>HTT</label>
    </interactant>
    <organismsDiffer>false</organismsDiffer>
    <experiments>9</experiments>
</comment>
<comment type="interaction">
    <interactant intactId="EBI-25850646">
        <id>Q8N5S9-2</id>
    </interactant>
    <interactant intactId="EBI-10975473">
        <id>O60333-2</id>
        <label>KIF1B</label>
    </interactant>
    <organismsDiffer>false</organismsDiffer>
    <experiments>3</experiments>
</comment>
<comment type="interaction">
    <interactant intactId="EBI-25850646">
        <id>Q8N5S9-2</id>
    </interactant>
    <interactant intactId="EBI-475646">
        <id>P07196</id>
        <label>NEFL</label>
    </interactant>
    <organismsDiffer>false</organismsDiffer>
    <experiments>3</experiments>
</comment>
<comment type="interaction">
    <interactant intactId="EBI-25850646">
        <id>Q8N5S9-2</id>
    </interactant>
    <interactant intactId="EBI-1164361">
        <id>Q99497</id>
        <label>PARK7</label>
    </interactant>
    <organismsDiffer>false</organismsDiffer>
    <experiments>3</experiments>
</comment>
<comment type="interaction">
    <interactant intactId="EBI-25850646">
        <id>Q8N5S9-2</id>
    </interactant>
    <interactant intactId="EBI-473160">
        <id>Q8N2W9</id>
        <label>PIAS4</label>
    </interactant>
    <organismsDiffer>false</organismsDiffer>
    <experiments>3</experiments>
</comment>
<comment type="interaction">
    <interactant intactId="EBI-25850646">
        <id>Q8N5S9-2</id>
    </interactant>
    <interactant intactId="EBI-749195">
        <id>P60891</id>
        <label>PRPS1</label>
    </interactant>
    <organismsDiffer>false</organismsDiffer>
    <experiments>3</experiments>
</comment>
<comment type="interaction">
    <interactant intactId="EBI-25850646">
        <id>Q8N5S9-2</id>
    </interactant>
    <interactant intactId="EBI-396669">
        <id>Q9Y3C5</id>
        <label>RNF11</label>
    </interactant>
    <organismsDiffer>false</organismsDiffer>
    <experiments>3</experiments>
</comment>
<comment type="interaction">
    <interactant intactId="EBI-25850646">
        <id>Q8N5S9-2</id>
    </interactant>
    <interactant intactId="EBI-985879">
        <id>P37840</id>
        <label>SNCA</label>
    </interactant>
    <organismsDiffer>false</organismsDiffer>
    <experiments>3</experiments>
</comment>
<comment type="interaction">
    <interactant intactId="EBI-25850646">
        <id>Q8N5S9-2</id>
    </interactant>
    <interactant intactId="EBI-990792">
        <id>P00441</id>
        <label>SOD1</label>
    </interactant>
    <organismsDiffer>false</organismsDiffer>
    <experiments>3</experiments>
</comment>
<comment type="interaction">
    <interactant intactId="EBI-25850646">
        <id>Q8N5S9-2</id>
    </interactant>
    <interactant intactId="EBI-720609">
        <id>O76024</id>
        <label>WFS1</label>
    </interactant>
    <organismsDiffer>false</organismsDiffer>
    <experiments>3</experiments>
</comment>
<comment type="subcellular location">
    <subcellularLocation>
        <location evidence="1">Cytoplasm</location>
    </subcellularLocation>
    <subcellularLocation>
        <location evidence="1">Nucleus</location>
    </subcellularLocation>
</comment>
<comment type="alternative products">
    <event type="alternative splicing"/>
    <isoform>
        <id>Q8N5S9-1</id>
        <name>1</name>
        <name>A</name>
        <name>Variant 3</name>
        <sequence type="displayed"/>
    </isoform>
    <isoform>
        <id>Q8N5S9-2</id>
        <name>2</name>
        <name>B</name>
        <name>Variant 1</name>
        <sequence type="described" ref="VSP_012140 VSP_012141"/>
    </isoform>
</comment>
<comment type="domain">
    <text>The autoinhibitory domain overlaps with the calmodulin binding region and may be involved in intrasteric autoinhibition.</text>
</comment>
<comment type="domain">
    <text evidence="1">The RP domain (arginine/proline-rich) is involved in the recognition of CAMKI and CAMK4 as substrates.</text>
</comment>
<comment type="PTM">
    <text evidence="1">Appears to be autophosphorylated in a Ca(2+)/calmodulin-dependent manner. Phosphorylated at multiple sites by PRCAKA/PKA. Phosphorylation of Ser-458 is blocked upon binding to Ca(2+)/calmodulin. In vitro, phosphorylated by CAMK1 and CAMK4 (By similarity).</text>
</comment>
<comment type="similarity">
    <text evidence="4">Belongs to the protein kinase superfamily. Ser/Thr protein kinase family.</text>
</comment>
<accession>Q8N5S9</accession>
<accession>Q9BQH3</accession>
<gene>
    <name type="primary">CAMKK1</name>
    <name type="synonym">CAMKKA</name>
</gene>
<dbReference type="EC" id="2.7.11.17"/>
<dbReference type="EMBL" id="AF425232">
    <property type="protein sequence ID" value="AAN37386.1"/>
    <property type="molecule type" value="mRNA"/>
</dbReference>
<dbReference type="EMBL" id="AF425301">
    <property type="protein sequence ID" value="AAN37387.1"/>
    <property type="molecule type" value="mRNA"/>
</dbReference>
<dbReference type="EMBL" id="AL136576">
    <property type="protein sequence ID" value="CAB66511.1"/>
    <property type="molecule type" value="mRNA"/>
</dbReference>
<dbReference type="EMBL" id="BC031647">
    <property type="protein sequence ID" value="AAH31647.1"/>
    <property type="molecule type" value="mRNA"/>
</dbReference>
<dbReference type="EMBL" id="BC043487">
    <property type="protein sequence ID" value="AAH43487.1"/>
    <property type="molecule type" value="mRNA"/>
</dbReference>
<dbReference type="CCDS" id="CCDS11038.1">
    <molecule id="Q8N5S9-1"/>
</dbReference>
<dbReference type="CCDS" id="CCDS11039.1">
    <molecule id="Q8N5S9-2"/>
</dbReference>
<dbReference type="RefSeq" id="NP_115670.1">
    <molecule id="Q8N5S9-1"/>
    <property type="nucleotide sequence ID" value="NM_032294.3"/>
</dbReference>
<dbReference type="RefSeq" id="NP_757343.2">
    <property type="nucleotide sequence ID" value="NM_172206.1"/>
</dbReference>
<dbReference type="RefSeq" id="NP_757344.2">
    <molecule id="Q8N5S9-2"/>
    <property type="nucleotide sequence ID" value="NM_172207.3"/>
</dbReference>
<dbReference type="RefSeq" id="XP_016880709.1">
    <property type="nucleotide sequence ID" value="XM_017025220.1"/>
</dbReference>
<dbReference type="PDB" id="6CCF">
    <property type="method" value="X-ray"/>
    <property type="resolution" value="2.10 A"/>
    <property type="chains" value="A/B=124-411"/>
</dbReference>
<dbReference type="PDB" id="6CD6">
    <property type="method" value="X-ray"/>
    <property type="resolution" value="2.20 A"/>
    <property type="chains" value="A/B/C/D=124-411"/>
</dbReference>
<dbReference type="PDBsum" id="6CCF"/>
<dbReference type="PDBsum" id="6CD6"/>
<dbReference type="SASBDB" id="Q8N5S9"/>
<dbReference type="SMR" id="Q8N5S9"/>
<dbReference type="BioGRID" id="123981">
    <property type="interactions" value="48"/>
</dbReference>
<dbReference type="FunCoup" id="Q8N5S9">
    <property type="interactions" value="2624"/>
</dbReference>
<dbReference type="IntAct" id="Q8N5S9">
    <property type="interactions" value="51"/>
</dbReference>
<dbReference type="MINT" id="Q8N5S9"/>
<dbReference type="STRING" id="9606.ENSP00000371188"/>
<dbReference type="BindingDB" id="Q8N5S9"/>
<dbReference type="ChEMBL" id="CHEMBL5256"/>
<dbReference type="DrugBank" id="DB12010">
    <property type="generic name" value="Fostamatinib"/>
</dbReference>
<dbReference type="DrugCentral" id="Q8N5S9"/>
<dbReference type="GuidetoPHARMACOLOGY" id="1956"/>
<dbReference type="GlyGen" id="Q8N5S9">
    <property type="glycosylation" value="1 site, 1 O-linked glycan (1 site)"/>
</dbReference>
<dbReference type="iPTMnet" id="Q8N5S9"/>
<dbReference type="PhosphoSitePlus" id="Q8N5S9"/>
<dbReference type="SwissPalm" id="Q8N5S9"/>
<dbReference type="BioMuta" id="CAMKK1"/>
<dbReference type="DMDM" id="56404620"/>
<dbReference type="CPTAC" id="non-CPTAC-6029"/>
<dbReference type="jPOST" id="Q8N5S9"/>
<dbReference type="MassIVE" id="Q8N5S9"/>
<dbReference type="PaxDb" id="9606-ENSP00000158166"/>
<dbReference type="PeptideAtlas" id="Q8N5S9"/>
<dbReference type="ProteomicsDB" id="72092">
    <molecule id="Q8N5S9-1"/>
</dbReference>
<dbReference type="ProteomicsDB" id="72093">
    <molecule id="Q8N5S9-2"/>
</dbReference>
<dbReference type="Pumba" id="Q8N5S9"/>
<dbReference type="TopDownProteomics" id="Q8N5S9-2">
    <molecule id="Q8N5S9-2"/>
</dbReference>
<dbReference type="Antibodypedia" id="3968">
    <property type="antibodies" value="216 antibodies from 33 providers"/>
</dbReference>
<dbReference type="DNASU" id="84254"/>
<dbReference type="Ensembl" id="ENST00000158166.5">
    <molecule id="Q8N5S9-2"/>
    <property type="protein sequence ID" value="ENSP00000158166.5"/>
    <property type="gene ID" value="ENSG00000004660.15"/>
</dbReference>
<dbReference type="Ensembl" id="ENST00000348335.7">
    <molecule id="Q8N5S9-1"/>
    <property type="protein sequence ID" value="ENSP00000323118.3"/>
    <property type="gene ID" value="ENSG00000004660.15"/>
</dbReference>
<dbReference type="GeneID" id="84254"/>
<dbReference type="KEGG" id="hsa:84254"/>
<dbReference type="MANE-Select" id="ENST00000348335.7">
    <property type="protein sequence ID" value="ENSP00000323118.3"/>
    <property type="RefSeq nucleotide sequence ID" value="NM_032294.3"/>
    <property type="RefSeq protein sequence ID" value="NP_115670.1"/>
</dbReference>
<dbReference type="UCSC" id="uc002fwu.4">
    <molecule id="Q8N5S9-1"/>
    <property type="organism name" value="human"/>
</dbReference>
<dbReference type="AGR" id="HGNC:1469"/>
<dbReference type="CTD" id="84254"/>
<dbReference type="DisGeNET" id="84254"/>
<dbReference type="GeneCards" id="CAMKK1"/>
<dbReference type="HGNC" id="HGNC:1469">
    <property type="gene designation" value="CAMKK1"/>
</dbReference>
<dbReference type="HPA" id="ENSG00000004660">
    <property type="expression patterns" value="Tissue enhanced (brain)"/>
</dbReference>
<dbReference type="MIM" id="611411">
    <property type="type" value="gene"/>
</dbReference>
<dbReference type="neXtProt" id="NX_Q8N5S9"/>
<dbReference type="OpenTargets" id="ENSG00000004660"/>
<dbReference type="PharmGKB" id="PA26051"/>
<dbReference type="VEuPathDB" id="HostDB:ENSG00000004660"/>
<dbReference type="eggNOG" id="KOG0585">
    <property type="taxonomic scope" value="Eukaryota"/>
</dbReference>
<dbReference type="GeneTree" id="ENSGT00940000154890"/>
<dbReference type="HOGENOM" id="CLU_000288_63_0_1"/>
<dbReference type="InParanoid" id="Q8N5S9"/>
<dbReference type="OMA" id="MACGPCM"/>
<dbReference type="OrthoDB" id="68483at2759"/>
<dbReference type="PAN-GO" id="Q8N5S9">
    <property type="GO annotations" value="5 GO annotations based on evolutionary models"/>
</dbReference>
<dbReference type="PhylomeDB" id="Q8N5S9"/>
<dbReference type="TreeFam" id="TF313013"/>
<dbReference type="PathwayCommons" id="Q8N5S9"/>
<dbReference type="Reactome" id="R-HSA-111932">
    <property type="pathway name" value="CaMK IV-mediated phosphorylation of CREB"/>
</dbReference>
<dbReference type="Reactome" id="R-HSA-442729">
    <property type="pathway name" value="CREB1 phosphorylation through the activation of CaMKII/CaMKK/CaMKIV cascasde"/>
</dbReference>
<dbReference type="Reactome" id="R-HSA-9619229">
    <property type="pathway name" value="Activation of RAC1 downstream of NMDARs"/>
</dbReference>
<dbReference type="SignaLink" id="Q8N5S9"/>
<dbReference type="SIGNOR" id="Q8N5S9"/>
<dbReference type="BioGRID-ORCS" id="84254">
    <property type="hits" value="16 hits in 1190 CRISPR screens"/>
</dbReference>
<dbReference type="CD-CODE" id="FB4E32DD">
    <property type="entry name" value="Presynaptic clusters and postsynaptic densities"/>
</dbReference>
<dbReference type="ChiTaRS" id="CAMKK1">
    <property type="organism name" value="human"/>
</dbReference>
<dbReference type="GeneWiki" id="CAMKK1"/>
<dbReference type="GenomeRNAi" id="84254"/>
<dbReference type="Pharos" id="Q8N5S9">
    <property type="development level" value="Tchem"/>
</dbReference>
<dbReference type="PRO" id="PR:Q8N5S9"/>
<dbReference type="Proteomes" id="UP000005640">
    <property type="component" value="Chromosome 17"/>
</dbReference>
<dbReference type="RNAct" id="Q8N5S9">
    <property type="molecule type" value="protein"/>
</dbReference>
<dbReference type="Bgee" id="ENSG00000004660">
    <property type="expression patterns" value="Expressed in right frontal lobe and 144 other cell types or tissues"/>
</dbReference>
<dbReference type="ExpressionAtlas" id="Q8N5S9">
    <property type="expression patterns" value="baseline and differential"/>
</dbReference>
<dbReference type="GO" id="GO:0005737">
    <property type="term" value="C:cytoplasm"/>
    <property type="evidence" value="ECO:0000318"/>
    <property type="project" value="GO_Central"/>
</dbReference>
<dbReference type="GO" id="GO:0005829">
    <property type="term" value="C:cytosol"/>
    <property type="evidence" value="ECO:0000304"/>
    <property type="project" value="Reactome"/>
</dbReference>
<dbReference type="GO" id="GO:0005654">
    <property type="term" value="C:nucleoplasm"/>
    <property type="evidence" value="ECO:0000304"/>
    <property type="project" value="Reactome"/>
</dbReference>
<dbReference type="GO" id="GO:0005524">
    <property type="term" value="F:ATP binding"/>
    <property type="evidence" value="ECO:0007669"/>
    <property type="project" value="UniProtKB-KW"/>
</dbReference>
<dbReference type="GO" id="GO:0004683">
    <property type="term" value="F:calcium/calmodulin-dependent protein kinase activity"/>
    <property type="evidence" value="ECO:0000318"/>
    <property type="project" value="GO_Central"/>
</dbReference>
<dbReference type="GO" id="GO:0005516">
    <property type="term" value="F:calmodulin binding"/>
    <property type="evidence" value="ECO:0000318"/>
    <property type="project" value="GO_Central"/>
</dbReference>
<dbReference type="GO" id="GO:0106310">
    <property type="term" value="F:protein serine kinase activity"/>
    <property type="evidence" value="ECO:0007669"/>
    <property type="project" value="RHEA"/>
</dbReference>
<dbReference type="GO" id="GO:0035556">
    <property type="term" value="P:intracellular signal transduction"/>
    <property type="evidence" value="ECO:0000318"/>
    <property type="project" value="GO_Central"/>
</dbReference>
<dbReference type="CDD" id="cd14200">
    <property type="entry name" value="STKc_CaMKK1"/>
    <property type="match status" value="1"/>
</dbReference>
<dbReference type="FunFam" id="3.30.200.20:FF:000429">
    <property type="entry name" value="Calcium/calmodulin-dependent protein kinase kinase"/>
    <property type="match status" value="1"/>
</dbReference>
<dbReference type="FunFam" id="1.10.510.10:FF:000091">
    <property type="entry name" value="Calcium/calmodulin-dependent protein kinase kinase 2 isoform 1"/>
    <property type="match status" value="1"/>
</dbReference>
<dbReference type="Gene3D" id="3.30.200.20">
    <property type="entry name" value="Phosphorylase Kinase, domain 1"/>
    <property type="match status" value="1"/>
</dbReference>
<dbReference type="Gene3D" id="1.10.510.10">
    <property type="entry name" value="Transferase(Phosphotransferase) domain 1"/>
    <property type="match status" value="1"/>
</dbReference>
<dbReference type="InterPro" id="IPR011009">
    <property type="entry name" value="Kinase-like_dom_sf"/>
</dbReference>
<dbReference type="InterPro" id="IPR000719">
    <property type="entry name" value="Prot_kinase_dom"/>
</dbReference>
<dbReference type="InterPro" id="IPR017441">
    <property type="entry name" value="Protein_kinase_ATP_BS"/>
</dbReference>
<dbReference type="InterPro" id="IPR008271">
    <property type="entry name" value="Ser/Thr_kinase_AS"/>
</dbReference>
<dbReference type="PANTHER" id="PTHR43895">
    <property type="entry name" value="CALCIUM/CALMODULIN-DEPENDENT PROTEIN KINASE KINASE-RELATED"/>
    <property type="match status" value="1"/>
</dbReference>
<dbReference type="PANTHER" id="PTHR43895:SF26">
    <property type="entry name" value="CALCIUM_CALMODULIN DEPENDENT PROTEIN KINASE KINASE 1"/>
    <property type="match status" value="1"/>
</dbReference>
<dbReference type="Pfam" id="PF00069">
    <property type="entry name" value="Pkinase"/>
    <property type="match status" value="1"/>
</dbReference>
<dbReference type="SMART" id="SM00220">
    <property type="entry name" value="S_TKc"/>
    <property type="match status" value="1"/>
</dbReference>
<dbReference type="SUPFAM" id="SSF56112">
    <property type="entry name" value="Protein kinase-like (PK-like)"/>
    <property type="match status" value="1"/>
</dbReference>
<dbReference type="PROSITE" id="PS00107">
    <property type="entry name" value="PROTEIN_KINASE_ATP"/>
    <property type="match status" value="1"/>
</dbReference>
<dbReference type="PROSITE" id="PS50011">
    <property type="entry name" value="PROTEIN_KINASE_DOM"/>
    <property type="match status" value="1"/>
</dbReference>
<dbReference type="PROSITE" id="PS00108">
    <property type="entry name" value="PROTEIN_KINASE_ST"/>
    <property type="match status" value="1"/>
</dbReference>
<keyword id="KW-0002">3D-structure</keyword>
<keyword id="KW-0025">Alternative splicing</keyword>
<keyword id="KW-0067">ATP-binding</keyword>
<keyword id="KW-0112">Calmodulin-binding</keyword>
<keyword id="KW-0963">Cytoplasm</keyword>
<keyword id="KW-0418">Kinase</keyword>
<keyword id="KW-0488">Methylation</keyword>
<keyword id="KW-0547">Nucleotide-binding</keyword>
<keyword id="KW-0539">Nucleus</keyword>
<keyword id="KW-0597">Phosphoprotein</keyword>
<keyword id="KW-1267">Proteomics identification</keyword>
<keyword id="KW-1185">Reference proteome</keyword>
<keyword id="KW-0723">Serine/threonine-protein kinase</keyword>
<keyword id="KW-0808">Transferase</keyword>
<feature type="chain" id="PRO_0000086141" description="Calcium/calmodulin-dependent protein kinase kinase 1">
    <location>
        <begin position="1"/>
        <end position="505"/>
    </location>
</feature>
<feature type="domain" description="Protein kinase" evidence="4">
    <location>
        <begin position="128"/>
        <end position="409"/>
    </location>
</feature>
<feature type="region of interest" description="Disordered" evidence="6">
    <location>
        <begin position="26"/>
        <end position="61"/>
    </location>
</feature>
<feature type="region of interest" description="RP domain">
    <location>
        <begin position="167"/>
        <end position="189"/>
    </location>
</feature>
<feature type="region of interest" description="Autoinhibitory domain" evidence="1">
    <location>
        <begin position="435"/>
        <end position="440"/>
    </location>
</feature>
<feature type="region of interest" description="Calmodulin-binding" evidence="1">
    <location>
        <begin position="438"/>
        <end position="463"/>
    </location>
</feature>
<feature type="region of interest" description="Disordered" evidence="6">
    <location>
        <begin position="460"/>
        <end position="505"/>
    </location>
</feature>
<feature type="active site" description="Proton acceptor" evidence="4 5">
    <location>
        <position position="275"/>
    </location>
</feature>
<feature type="binding site" evidence="4">
    <location>
        <begin position="134"/>
        <end position="142"/>
    </location>
    <ligand>
        <name>ATP</name>
        <dbReference type="ChEBI" id="CHEBI:30616"/>
    </ligand>
</feature>
<feature type="binding site" evidence="4">
    <location>
        <position position="157"/>
    </location>
    <ligand>
        <name>ATP</name>
        <dbReference type="ChEBI" id="CHEBI:30616"/>
    </ligand>
</feature>
<feature type="modified residue" description="Phosphoserine" evidence="15">
    <location>
        <position position="67"/>
    </location>
</feature>
<feature type="modified residue" description="Phosphoserine" evidence="3">
    <location>
        <position position="74"/>
    </location>
</feature>
<feature type="modified residue" description="Asymmetric dimethylarginine" evidence="3">
    <location>
        <position position="78"/>
    </location>
</feature>
<feature type="modified residue" description="Phosphoserine" evidence="3">
    <location>
        <position position="100"/>
    </location>
</feature>
<feature type="modified residue" description="Phosphothreonine" evidence="2">
    <location>
        <position position="108"/>
    </location>
</feature>
<feature type="modified residue" description="Phosphoserine" evidence="14 15 16">
    <location>
        <position position="458"/>
    </location>
</feature>
<feature type="modified residue" description="Phosphoserine" evidence="2">
    <location>
        <position position="475"/>
    </location>
</feature>
<feature type="modified residue" description="Phosphoserine" evidence="13">
    <location>
        <position position="492"/>
    </location>
</feature>
<feature type="splice variant" id="VSP_012140" description="In isoform 2." evidence="10 11 12">
    <original>L</original>
    <variation>LALQNQAQNIQLDSTNIAKPHSLLPSEQQDSGSTWAARS</variation>
    <location>
        <position position="228"/>
    </location>
</feature>
<feature type="splice variant" id="VSP_012141" description="In isoform 2." evidence="10 11 12">
    <location>
        <begin position="483"/>
        <end position="505"/>
    </location>
</feature>
<feature type="sequence variant" id="VAR_020531" description="In dbSNP:rs7214723." evidence="8 9">
    <original>E</original>
    <variation>G</variation>
    <location>
        <position position="375"/>
    </location>
</feature>
<feature type="strand" evidence="17">
    <location>
        <begin position="128"/>
        <end position="136"/>
    </location>
</feature>
<feature type="strand" evidence="17">
    <location>
        <begin position="138"/>
        <end position="147"/>
    </location>
</feature>
<feature type="turn" evidence="17">
    <location>
        <begin position="148"/>
        <end position="151"/>
    </location>
</feature>
<feature type="strand" evidence="17">
    <location>
        <begin position="152"/>
        <end position="160"/>
    </location>
</feature>
<feature type="turn" evidence="17">
    <location>
        <begin position="161"/>
        <end position="163"/>
    </location>
</feature>
<feature type="helix" evidence="17">
    <location>
        <begin position="195"/>
        <end position="205"/>
    </location>
</feature>
<feature type="strand" evidence="17">
    <location>
        <begin position="214"/>
        <end position="219"/>
    </location>
</feature>
<feature type="strand" evidence="17">
    <location>
        <begin position="223"/>
        <end position="231"/>
    </location>
</feature>
<feature type="helix" evidence="17">
    <location>
        <begin position="249"/>
        <end position="268"/>
    </location>
</feature>
<feature type="helix" evidence="17">
    <location>
        <begin position="278"/>
        <end position="280"/>
    </location>
</feature>
<feature type="strand" evidence="17">
    <location>
        <begin position="281"/>
        <end position="283"/>
    </location>
</feature>
<feature type="strand" evidence="17">
    <location>
        <begin position="289"/>
        <end position="291"/>
    </location>
</feature>
<feature type="helix" evidence="17">
    <location>
        <begin position="314"/>
        <end position="316"/>
    </location>
</feature>
<feature type="helix" evidence="17">
    <location>
        <begin position="319"/>
        <end position="322"/>
    </location>
</feature>
<feature type="helix" evidence="17">
    <location>
        <begin position="331"/>
        <end position="348"/>
    </location>
</feature>
<feature type="helix" evidence="17">
    <location>
        <begin position="358"/>
        <end position="367"/>
    </location>
</feature>
<feature type="strand" evidence="17">
    <location>
        <begin position="374"/>
        <end position="376"/>
    </location>
</feature>
<feature type="helix" evidence="17">
    <location>
        <begin position="380"/>
        <end position="389"/>
    </location>
</feature>
<feature type="turn" evidence="17">
    <location>
        <begin position="394"/>
        <end position="396"/>
    </location>
</feature>
<feature type="helix" evidence="17">
    <location>
        <begin position="400"/>
        <end position="405"/>
    </location>
</feature>
<feature type="helix" evidence="17">
    <location>
        <begin position="407"/>
        <end position="410"/>
    </location>
</feature>